<organism>
    <name type="scientific">Homo sapiens</name>
    <name type="common">Human</name>
    <dbReference type="NCBI Taxonomy" id="9606"/>
    <lineage>
        <taxon>Eukaryota</taxon>
        <taxon>Metazoa</taxon>
        <taxon>Chordata</taxon>
        <taxon>Craniata</taxon>
        <taxon>Vertebrata</taxon>
        <taxon>Euteleostomi</taxon>
        <taxon>Mammalia</taxon>
        <taxon>Eutheria</taxon>
        <taxon>Euarchontoglires</taxon>
        <taxon>Primates</taxon>
        <taxon>Haplorrhini</taxon>
        <taxon>Catarrhini</taxon>
        <taxon>Hominidae</taxon>
        <taxon>Homo</taxon>
    </lineage>
</organism>
<feature type="chain" id="PRO_0000075769" description="LIM/homeobox protein Lhx1">
    <location>
        <begin position="1"/>
        <end position="406"/>
    </location>
</feature>
<feature type="domain" description="LIM zinc-binding 1" evidence="4">
    <location>
        <begin position="4"/>
        <end position="54"/>
    </location>
</feature>
<feature type="domain" description="LIM zinc-binding 2" evidence="4">
    <location>
        <begin position="63"/>
        <end position="117"/>
    </location>
</feature>
<feature type="DNA-binding region" description="Homeobox" evidence="3">
    <location>
        <begin position="180"/>
        <end position="239"/>
    </location>
</feature>
<feature type="region of interest" description="Disordered" evidence="5">
    <location>
        <begin position="128"/>
        <end position="187"/>
    </location>
</feature>
<feature type="region of interest" description="Disordered" evidence="5">
    <location>
        <begin position="293"/>
        <end position="374"/>
    </location>
</feature>
<feature type="compositionally biased region" description="Low complexity" evidence="5">
    <location>
        <begin position="137"/>
        <end position="148"/>
    </location>
</feature>
<feature type="compositionally biased region" description="Basic and acidic residues" evidence="5">
    <location>
        <begin position="151"/>
        <end position="167"/>
    </location>
</feature>
<feature type="compositionally biased region" description="Low complexity" evidence="5">
    <location>
        <begin position="315"/>
        <end position="327"/>
    </location>
</feature>
<feature type="compositionally biased region" description="Pro residues" evidence="5">
    <location>
        <begin position="352"/>
        <end position="362"/>
    </location>
</feature>
<feature type="modified residue" description="Phosphoserine" evidence="2">
    <location>
        <position position="162"/>
    </location>
</feature>
<feature type="sequence conflict" description="In Ref. 1; AAA21644." evidence="7" ref="1">
    <original>A</original>
    <variation>R</variation>
    <location>
        <position position="67"/>
    </location>
</feature>
<feature type="sequence conflict" description="In Ref. 1; AAA21644." evidence="7" ref="1">
    <original>R</original>
    <variation>G</variation>
    <location>
        <position position="184"/>
    </location>
</feature>
<feature type="sequence conflict" description="In Ref. 1; AAA21644." evidence="7" ref="1">
    <original>GARR</original>
    <variation>AG</variation>
    <location>
        <begin position="245"/>
        <end position="248"/>
    </location>
</feature>
<reference key="1">
    <citation type="journal article" date="1997" name="DNA Cell Biol.">
        <title>Cloning, expression, and chromosomal localization to 11p12-13 of a human LIM/homeobox gene, hLim-1.</title>
        <authorList>
            <person name="Dong W.F."/>
            <person name="Heng H.H.Q."/>
            <person name="Lowsky R."/>
            <person name="Xu Y."/>
            <person name="Decoteau J.F."/>
            <person name="Shi X.-M."/>
            <person name="Tsui L.-C."/>
            <person name="Minden M.D."/>
        </authorList>
    </citation>
    <scope>NUCLEOTIDE SEQUENCE [MRNA]</scope>
    <scope>FUNCTION</scope>
    <scope>TISSUE SPECIFICITY</scope>
    <source>
        <tissue>Fetal brain</tissue>
    </source>
</reference>
<reference key="2">
    <citation type="journal article" date="2006" name="Nature">
        <title>DNA sequence of human chromosome 17 and analysis of rearrangement in the human lineage.</title>
        <authorList>
            <person name="Zody M.C."/>
            <person name="Garber M."/>
            <person name="Adams D.J."/>
            <person name="Sharpe T."/>
            <person name="Harrow J."/>
            <person name="Lupski J.R."/>
            <person name="Nicholson C."/>
            <person name="Searle S.M."/>
            <person name="Wilming L."/>
            <person name="Young S.K."/>
            <person name="Abouelleil A."/>
            <person name="Allen N.R."/>
            <person name="Bi W."/>
            <person name="Bloom T."/>
            <person name="Borowsky M.L."/>
            <person name="Bugalter B.E."/>
            <person name="Butler J."/>
            <person name="Chang J.L."/>
            <person name="Chen C.-K."/>
            <person name="Cook A."/>
            <person name="Corum B."/>
            <person name="Cuomo C.A."/>
            <person name="de Jong P.J."/>
            <person name="DeCaprio D."/>
            <person name="Dewar K."/>
            <person name="FitzGerald M."/>
            <person name="Gilbert J."/>
            <person name="Gibson R."/>
            <person name="Gnerre S."/>
            <person name="Goldstein S."/>
            <person name="Grafham D.V."/>
            <person name="Grocock R."/>
            <person name="Hafez N."/>
            <person name="Hagopian D.S."/>
            <person name="Hart E."/>
            <person name="Norman C.H."/>
            <person name="Humphray S."/>
            <person name="Jaffe D.B."/>
            <person name="Jones M."/>
            <person name="Kamal M."/>
            <person name="Khodiyar V.K."/>
            <person name="LaButti K."/>
            <person name="Laird G."/>
            <person name="Lehoczky J."/>
            <person name="Liu X."/>
            <person name="Lokyitsang T."/>
            <person name="Loveland J."/>
            <person name="Lui A."/>
            <person name="Macdonald P."/>
            <person name="Major J.E."/>
            <person name="Matthews L."/>
            <person name="Mauceli E."/>
            <person name="McCarroll S.A."/>
            <person name="Mihalev A.H."/>
            <person name="Mudge J."/>
            <person name="Nguyen C."/>
            <person name="Nicol R."/>
            <person name="O'Leary S.B."/>
            <person name="Osoegawa K."/>
            <person name="Schwartz D.C."/>
            <person name="Shaw-Smith C."/>
            <person name="Stankiewicz P."/>
            <person name="Steward C."/>
            <person name="Swarbreck D."/>
            <person name="Venkataraman V."/>
            <person name="Whittaker C.A."/>
            <person name="Yang X."/>
            <person name="Zimmer A.R."/>
            <person name="Bradley A."/>
            <person name="Hubbard T."/>
            <person name="Birren B.W."/>
            <person name="Rogers J."/>
            <person name="Lander E.S."/>
            <person name="Nusbaum C."/>
        </authorList>
    </citation>
    <scope>NUCLEOTIDE SEQUENCE [LARGE SCALE GENOMIC DNA]</scope>
</reference>
<reference key="3">
    <citation type="journal article" date="2004" name="Genome Res.">
        <title>The status, quality, and expansion of the NIH full-length cDNA project: the Mammalian Gene Collection (MGC).</title>
        <authorList>
            <consortium name="The MGC Project Team"/>
        </authorList>
    </citation>
    <scope>NUCLEOTIDE SEQUENCE [LARGE SCALE MRNA]</scope>
    <source>
        <tissue>Cerebellum</tissue>
    </source>
</reference>
<sequence>MVHCAGCKRPILDRFLLNVLDRAWHVKCVQCCECKCNLTEKCFSREGKLYCKNDFFRCFGTKCAGCAQGISPSDLVRRARSKVFHLNCFTCMMCNKQLSTGEELYIIDENKFVCKEDYLSNSSVAKENSLHSATTGSDPSLSPDSQDPSQDDAKDSESANVSDKEAGSNENDDQNLGAKRRGPRTTIKAKQLETLKAAFAATPKPTRHIREQLAQETGLNMRVIQVWFQNRRSKERRMKQLSALGARRHAFFRSPRRMRPLVDRLEPGELIPNGPFSFYGDYQSEYYGPGGNYDFFPQGPPSSQAQTPVDLPFVPSSGPSGTPLGGLEHPLPGHHPSSEAQRFTDILAHPPGDSPSPEPSLPGPLHSMSAEVFGPSPPFSSLSVNGGASYGNHLSHPPEMNEAAVW</sequence>
<evidence type="ECO:0000250" key="1"/>
<evidence type="ECO:0000250" key="2">
    <source>
        <dbReference type="UniProtKB" id="P63007"/>
    </source>
</evidence>
<evidence type="ECO:0000255" key="3">
    <source>
        <dbReference type="PROSITE-ProRule" id="PRU00108"/>
    </source>
</evidence>
<evidence type="ECO:0000255" key="4">
    <source>
        <dbReference type="PROSITE-ProRule" id="PRU00125"/>
    </source>
</evidence>
<evidence type="ECO:0000256" key="5">
    <source>
        <dbReference type="SAM" id="MobiDB-lite"/>
    </source>
</evidence>
<evidence type="ECO:0000269" key="6">
    <source>
    </source>
</evidence>
<evidence type="ECO:0000305" key="7"/>
<protein>
    <recommendedName>
        <fullName>LIM/homeobox protein Lhx1</fullName>
        <shortName>LIM homeobox protein 1</shortName>
    </recommendedName>
    <alternativeName>
        <fullName>Homeobox protein Lim-1</fullName>
        <shortName>hLim-1</shortName>
    </alternativeName>
</protein>
<proteinExistence type="evidence at protein level"/>
<gene>
    <name type="primary">LHX1</name>
    <name type="synonym">LIM-1</name>
    <name type="synonym">LIM1</name>
</gene>
<keyword id="KW-0217">Developmental protein</keyword>
<keyword id="KW-0221">Differentiation</keyword>
<keyword id="KW-0238">DNA-binding</keyword>
<keyword id="KW-0371">Homeobox</keyword>
<keyword id="KW-0440">LIM domain</keyword>
<keyword id="KW-0479">Metal-binding</keyword>
<keyword id="KW-0524">Neurogenesis</keyword>
<keyword id="KW-0539">Nucleus</keyword>
<keyword id="KW-0597">Phosphoprotein</keyword>
<keyword id="KW-1267">Proteomics identification</keyword>
<keyword id="KW-1185">Reference proteome</keyword>
<keyword id="KW-0677">Repeat</keyword>
<keyword id="KW-0804">Transcription</keyword>
<keyword id="KW-0805">Transcription regulation</keyword>
<keyword id="KW-0862">Zinc</keyword>
<name>LHX1_HUMAN</name>
<comment type="function">
    <text evidence="6">Potential transcription factor. May play a role in early mesoderm formation and later in lateral mesoderm differentiation and neurogenesis.</text>
</comment>
<comment type="subunit">
    <text evidence="1">Interacts with LDB1 via the tandem LIM domains.</text>
</comment>
<comment type="interaction">
    <interactant intactId="EBI-11990598">
        <id>P48742</id>
    </interactant>
    <interactant intactId="EBI-739879">
        <id>Q53TS8</id>
        <label>C2CD6</label>
    </interactant>
    <organismsDiffer>false</organismsDiffer>
    <experiments>5</experiments>
</comment>
<comment type="interaction">
    <interactant intactId="EBI-11990598">
        <id>P48742</id>
    </interactant>
    <interactant intactId="EBI-2556193">
        <id>Q63ZY3</id>
        <label>KANK2</label>
    </interactant>
    <organismsDiffer>false</organismsDiffer>
    <experiments>3</experiments>
</comment>
<comment type="interaction">
    <interactant intactId="EBI-11990598">
        <id>P48742</id>
    </interactant>
    <interactant intactId="EBI-11979761">
        <id>Q86U70-2</id>
        <label>LDB1</label>
    </interactant>
    <organismsDiffer>false</organismsDiffer>
    <experiments>3</experiments>
</comment>
<comment type="interaction">
    <interactant intactId="EBI-11990598">
        <id>P48742</id>
    </interactant>
    <interactant intactId="EBI-748391">
        <id>Q9BWG6</id>
        <label>SCNM1</label>
    </interactant>
    <organismsDiffer>false</organismsDiffer>
    <experiments>3</experiments>
</comment>
<comment type="subcellular location">
    <subcellularLocation>
        <location evidence="7">Nucleus</location>
    </subcellularLocation>
</comment>
<comment type="tissue specificity">
    <text evidence="6">Expressed in the brain, thymus, and tonsils. Expressed in samples from patients with chronic myeloid leukemia (CML) and in 58% of acute myeloid leukemia (AML) cell lines.</text>
</comment>
<comment type="domain">
    <text evidence="1">The LIM domains exert a negative regulatory function and disruption of the LIM domains produces an activated form. In addition, two activation domains and a negative regulatory domain exist C-terminally to the homeobox (By similarity).</text>
</comment>
<accession>P48742</accession>
<accession>Q3MIW0</accession>
<dbReference type="EMBL" id="U14755">
    <property type="protein sequence ID" value="AAA21644.1"/>
    <property type="molecule type" value="mRNA"/>
</dbReference>
<dbReference type="EMBL" id="AC023315">
    <property type="status" value="NOT_ANNOTATED_CDS"/>
    <property type="molecule type" value="Genomic_DNA"/>
</dbReference>
<dbReference type="EMBL" id="AC025882">
    <property type="status" value="NOT_ANNOTATED_CDS"/>
    <property type="molecule type" value="Genomic_DNA"/>
</dbReference>
<dbReference type="EMBL" id="BC111936">
    <property type="protein sequence ID" value="AAI11937.1"/>
    <property type="molecule type" value="mRNA"/>
</dbReference>
<dbReference type="EMBL" id="BC101674">
    <property type="protein sequence ID" value="AAI01675.1"/>
    <property type="molecule type" value="mRNA"/>
</dbReference>
<dbReference type="CCDS" id="CCDS11316.1"/>
<dbReference type="PIR" id="G01507">
    <property type="entry name" value="G01507"/>
</dbReference>
<dbReference type="RefSeq" id="NP_005559.2">
    <property type="nucleotide sequence ID" value="NM_005568.4"/>
</dbReference>
<dbReference type="RefSeq" id="XP_047291922.1">
    <property type="nucleotide sequence ID" value="XM_047435966.1"/>
</dbReference>
<dbReference type="RefSeq" id="XP_047291923.1">
    <property type="nucleotide sequence ID" value="XM_047435967.1"/>
</dbReference>
<dbReference type="RefSeq" id="XP_054172024.1">
    <property type="nucleotide sequence ID" value="XM_054316049.1"/>
</dbReference>
<dbReference type="RefSeq" id="XP_054172025.1">
    <property type="nucleotide sequence ID" value="XM_054316050.1"/>
</dbReference>
<dbReference type="RefSeq" id="XP_054185273.1">
    <property type="nucleotide sequence ID" value="XM_054329298.1"/>
</dbReference>
<dbReference type="RefSeq" id="XP_054185274.1">
    <property type="nucleotide sequence ID" value="XM_054329299.1"/>
</dbReference>
<dbReference type="SMR" id="P48742"/>
<dbReference type="BioGRID" id="110163">
    <property type="interactions" value="99"/>
</dbReference>
<dbReference type="FunCoup" id="P48742">
    <property type="interactions" value="454"/>
</dbReference>
<dbReference type="IntAct" id="P48742">
    <property type="interactions" value="93"/>
</dbReference>
<dbReference type="STRING" id="9606.ENSP00000477829"/>
<dbReference type="iPTMnet" id="P48742"/>
<dbReference type="PhosphoSitePlus" id="P48742"/>
<dbReference type="BioMuta" id="LHX1"/>
<dbReference type="DMDM" id="60416412"/>
<dbReference type="MassIVE" id="P48742"/>
<dbReference type="PaxDb" id="9606-ENSP00000477829"/>
<dbReference type="PeptideAtlas" id="P48742"/>
<dbReference type="ProteomicsDB" id="55941"/>
<dbReference type="Antibodypedia" id="72534">
    <property type="antibodies" value="567 antibodies from 34 providers"/>
</dbReference>
<dbReference type="DNASU" id="3975"/>
<dbReference type="Ensembl" id="ENST00000614239.1">
    <property type="protein sequence ID" value="ENSP00000477829.1"/>
    <property type="gene ID" value="ENSG00000273706.5"/>
</dbReference>
<dbReference type="Ensembl" id="ENST00000620305.2">
    <property type="protein sequence ID" value="ENSP00000484449.1"/>
    <property type="gene ID" value="ENSG00000274577.2"/>
</dbReference>
<dbReference type="GeneID" id="3975"/>
<dbReference type="KEGG" id="hsa:3975"/>
<dbReference type="MANE-Select" id="ENST00000614239.1">
    <property type="protein sequence ID" value="ENSP00000477829.1"/>
    <property type="RefSeq nucleotide sequence ID" value="NM_005568.5"/>
    <property type="RefSeq protein sequence ID" value="NP_005559.2"/>
</dbReference>
<dbReference type="UCSC" id="uc032feb.2">
    <property type="organism name" value="human"/>
</dbReference>
<dbReference type="AGR" id="HGNC:6593"/>
<dbReference type="CTD" id="3975"/>
<dbReference type="DisGeNET" id="3975"/>
<dbReference type="GeneCards" id="LHX1"/>
<dbReference type="GeneReviews" id="LHX1"/>
<dbReference type="HGNC" id="HGNC:6593">
    <property type="gene designation" value="LHX1"/>
</dbReference>
<dbReference type="HPA" id="ENSG00000273706">
    <property type="expression patterns" value="Group enriched (brain, kidney)"/>
</dbReference>
<dbReference type="MalaCards" id="LHX1"/>
<dbReference type="MIM" id="601999">
    <property type="type" value="gene"/>
</dbReference>
<dbReference type="neXtProt" id="NX_P48742"/>
<dbReference type="OpenTargets" id="ENSG00000273706"/>
<dbReference type="Orphanet" id="261265">
    <property type="disease" value="17q12 microdeletion syndrome"/>
</dbReference>
<dbReference type="PharmGKB" id="PA30364"/>
<dbReference type="VEuPathDB" id="HostDB:ENSG00000273706"/>
<dbReference type="eggNOG" id="KOG0490">
    <property type="taxonomic scope" value="Eukaryota"/>
</dbReference>
<dbReference type="GeneTree" id="ENSGT00940000160834"/>
<dbReference type="HOGENOM" id="CLU_027802_3_1_1"/>
<dbReference type="InParanoid" id="P48742"/>
<dbReference type="OMA" id="NDQQFYP"/>
<dbReference type="OrthoDB" id="10068367at2759"/>
<dbReference type="PAN-GO" id="P48742">
    <property type="GO annotations" value="5 GO annotations based on evolutionary models"/>
</dbReference>
<dbReference type="PhylomeDB" id="P48742"/>
<dbReference type="TreeFam" id="TF315442"/>
<dbReference type="PathwayCommons" id="P48742"/>
<dbReference type="Reactome" id="R-HSA-9761174">
    <property type="pathway name" value="Formation of intermediate mesoderm"/>
</dbReference>
<dbReference type="Reactome" id="R-HSA-9830364">
    <property type="pathway name" value="Formation of the nephric duct"/>
</dbReference>
<dbReference type="Reactome" id="R-HSA-9831926">
    <property type="pathway name" value="Nephron development"/>
</dbReference>
<dbReference type="SignaLink" id="P48742"/>
<dbReference type="SIGNOR" id="P48742"/>
<dbReference type="BioGRID-ORCS" id="3975">
    <property type="hits" value="17 hits in 1168 CRISPR screens"/>
</dbReference>
<dbReference type="ChiTaRS" id="LHX1">
    <property type="organism name" value="human"/>
</dbReference>
<dbReference type="GeneWiki" id="LHX1"/>
<dbReference type="GenomeRNAi" id="3975"/>
<dbReference type="Pharos" id="P48742">
    <property type="development level" value="Tbio"/>
</dbReference>
<dbReference type="PRO" id="PR:P48742"/>
<dbReference type="Proteomes" id="UP000005640">
    <property type="component" value="Chromosome 17"/>
</dbReference>
<dbReference type="RNAct" id="P48742">
    <property type="molecule type" value="protein"/>
</dbReference>
<dbReference type="Bgee" id="ENSG00000273706">
    <property type="expression patterns" value="Expressed in cerebellum and 43 other cell types or tissues"/>
</dbReference>
<dbReference type="ExpressionAtlas" id="P48742">
    <property type="expression patterns" value="baseline and differential"/>
</dbReference>
<dbReference type="GO" id="GO:0000785">
    <property type="term" value="C:chromatin"/>
    <property type="evidence" value="ECO:0000247"/>
    <property type="project" value="NTNU_SB"/>
</dbReference>
<dbReference type="GO" id="GO:0005634">
    <property type="term" value="C:nucleus"/>
    <property type="evidence" value="ECO:0000250"/>
    <property type="project" value="UniProtKB"/>
</dbReference>
<dbReference type="GO" id="GO:0032991">
    <property type="term" value="C:protein-containing complex"/>
    <property type="evidence" value="ECO:0000250"/>
    <property type="project" value="UniProtKB"/>
</dbReference>
<dbReference type="GO" id="GO:0005667">
    <property type="term" value="C:transcription regulator complex"/>
    <property type="evidence" value="ECO:0007669"/>
    <property type="project" value="Ensembl"/>
</dbReference>
<dbReference type="GO" id="GO:0000987">
    <property type="term" value="F:cis-regulatory region sequence-specific DNA binding"/>
    <property type="evidence" value="ECO:0007669"/>
    <property type="project" value="Ensembl"/>
</dbReference>
<dbReference type="GO" id="GO:0003700">
    <property type="term" value="F:DNA-binding transcription factor activity"/>
    <property type="evidence" value="ECO:0000250"/>
    <property type="project" value="UniProtKB"/>
</dbReference>
<dbReference type="GO" id="GO:0000981">
    <property type="term" value="F:DNA-binding transcription factor activity, RNA polymerase II-specific"/>
    <property type="evidence" value="ECO:0000247"/>
    <property type="project" value="NTNU_SB"/>
</dbReference>
<dbReference type="GO" id="GO:0000977">
    <property type="term" value="F:RNA polymerase II transcription regulatory region sequence-specific DNA binding"/>
    <property type="evidence" value="ECO:0000318"/>
    <property type="project" value="GO_Central"/>
</dbReference>
<dbReference type="GO" id="GO:1990837">
    <property type="term" value="F:sequence-specific double-stranded DNA binding"/>
    <property type="evidence" value="ECO:0000314"/>
    <property type="project" value="ARUK-UCL"/>
</dbReference>
<dbReference type="GO" id="GO:0008270">
    <property type="term" value="F:zinc ion binding"/>
    <property type="evidence" value="ECO:0007669"/>
    <property type="project" value="InterPro"/>
</dbReference>
<dbReference type="GO" id="GO:0048646">
    <property type="term" value="P:anatomical structure formation involved in morphogenesis"/>
    <property type="evidence" value="ECO:0000250"/>
    <property type="project" value="UniProtKB"/>
</dbReference>
<dbReference type="GO" id="GO:0009653">
    <property type="term" value="P:anatomical structure morphogenesis"/>
    <property type="evidence" value="ECO:0000250"/>
    <property type="project" value="UniProtKB"/>
</dbReference>
<dbReference type="GO" id="GO:0009887">
    <property type="term" value="P:animal organ morphogenesis"/>
    <property type="evidence" value="ECO:0000304"/>
    <property type="project" value="ProtInc"/>
</dbReference>
<dbReference type="GO" id="GO:0009948">
    <property type="term" value="P:anterior/posterior axis specification"/>
    <property type="evidence" value="ECO:0000250"/>
    <property type="project" value="UniProtKB"/>
</dbReference>
<dbReference type="GO" id="GO:0009952">
    <property type="term" value="P:anterior/posterior pattern specification"/>
    <property type="evidence" value="ECO:0000250"/>
    <property type="project" value="UniProtKB"/>
</dbReference>
<dbReference type="GO" id="GO:0001658">
    <property type="term" value="P:branching involved in ureteric bud morphogenesis"/>
    <property type="evidence" value="ECO:0007669"/>
    <property type="project" value="Ensembl"/>
</dbReference>
<dbReference type="GO" id="GO:0007267">
    <property type="term" value="P:cell-cell signaling"/>
    <property type="evidence" value="ECO:0000250"/>
    <property type="project" value="UniProtKB"/>
</dbReference>
<dbReference type="GO" id="GO:0044344">
    <property type="term" value="P:cellular response to fibroblast growth factor stimulus"/>
    <property type="evidence" value="ECO:0007669"/>
    <property type="project" value="Ensembl"/>
</dbReference>
<dbReference type="GO" id="GO:0021702">
    <property type="term" value="P:cerebellar Purkinje cell differentiation"/>
    <property type="evidence" value="ECO:0000250"/>
    <property type="project" value="UniProtKB"/>
</dbReference>
<dbReference type="GO" id="GO:0021937">
    <property type="term" value="P:cerebellar Purkinje cell-granule cell precursor cell signaling"/>
    <property type="evidence" value="ECO:0000250"/>
    <property type="project" value="UniProtKB"/>
</dbReference>
<dbReference type="GO" id="GO:0021549">
    <property type="term" value="P:cerebellum development"/>
    <property type="evidence" value="ECO:0000250"/>
    <property type="project" value="UniProtKB"/>
</dbReference>
<dbReference type="GO" id="GO:0060067">
    <property type="term" value="P:cervix development"/>
    <property type="evidence" value="ECO:0000250"/>
    <property type="project" value="UniProtKB"/>
</dbReference>
<dbReference type="GO" id="GO:0072049">
    <property type="term" value="P:comma-shaped body morphogenesis"/>
    <property type="evidence" value="ECO:0000250"/>
    <property type="project" value="UniProtKB"/>
</dbReference>
<dbReference type="GO" id="GO:0097379">
    <property type="term" value="P:dorsal spinal cord interneuron posterior axon guidance"/>
    <property type="evidence" value="ECO:0000250"/>
    <property type="project" value="UniProtKB"/>
</dbReference>
<dbReference type="GO" id="GO:0009953">
    <property type="term" value="P:dorsal/ventral pattern formation"/>
    <property type="evidence" value="ECO:0000250"/>
    <property type="project" value="UniProtKB"/>
</dbReference>
<dbReference type="GO" id="GO:0001705">
    <property type="term" value="P:ectoderm formation"/>
    <property type="evidence" value="ECO:0000250"/>
    <property type="project" value="UniProtKB"/>
</dbReference>
<dbReference type="GO" id="GO:0009880">
    <property type="term" value="P:embryonic pattern specification"/>
    <property type="evidence" value="ECO:0000250"/>
    <property type="project" value="UniProtKB"/>
</dbReference>
<dbReference type="GO" id="GO:0060059">
    <property type="term" value="P:embryonic retina morphogenesis in camera-type eye"/>
    <property type="evidence" value="ECO:0000250"/>
    <property type="project" value="UniProtKB"/>
</dbReference>
<dbReference type="GO" id="GO:0048703">
    <property type="term" value="P:embryonic viscerocranium morphogenesis"/>
    <property type="evidence" value="ECO:0000250"/>
    <property type="project" value="UniProtKB"/>
</dbReference>
<dbReference type="GO" id="GO:0001706">
    <property type="term" value="P:endoderm formation"/>
    <property type="evidence" value="ECO:0000250"/>
    <property type="project" value="UniProtKB"/>
</dbReference>
<dbReference type="GO" id="GO:0060429">
    <property type="term" value="P:epithelium development"/>
    <property type="evidence" value="ECO:0000250"/>
    <property type="project" value="UniProtKB"/>
</dbReference>
<dbReference type="GO" id="GO:0021871">
    <property type="term" value="P:forebrain regionalization"/>
    <property type="evidence" value="ECO:0000250"/>
    <property type="project" value="UniProtKB"/>
</dbReference>
<dbReference type="GO" id="GO:0001702">
    <property type="term" value="P:gastrulation with mouth forming second"/>
    <property type="evidence" value="ECO:0000250"/>
    <property type="project" value="UniProtKB"/>
</dbReference>
<dbReference type="GO" id="GO:0060322">
    <property type="term" value="P:head development"/>
    <property type="evidence" value="ECO:0000250"/>
    <property type="project" value="UniProtKB"/>
</dbReference>
<dbReference type="GO" id="GO:0001822">
    <property type="term" value="P:kidney development"/>
    <property type="evidence" value="ECO:0000250"/>
    <property type="project" value="UniProtKB"/>
</dbReference>
<dbReference type="GO" id="GO:0097477">
    <property type="term" value="P:lateral motor column neuron migration"/>
    <property type="evidence" value="ECO:0000250"/>
    <property type="project" value="UniProtKB"/>
</dbReference>
<dbReference type="GO" id="GO:0048382">
    <property type="term" value="P:mesendoderm development"/>
    <property type="evidence" value="ECO:0007669"/>
    <property type="project" value="Ensembl"/>
</dbReference>
<dbReference type="GO" id="GO:0072177">
    <property type="term" value="P:mesonephric duct development"/>
    <property type="evidence" value="ECO:0007669"/>
    <property type="project" value="Ensembl"/>
</dbReference>
<dbReference type="GO" id="GO:0072278">
    <property type="term" value="P:metanephric comma-shaped body morphogenesis"/>
    <property type="evidence" value="ECO:0007669"/>
    <property type="project" value="Ensembl"/>
</dbReference>
<dbReference type="GO" id="GO:0072224">
    <property type="term" value="P:metanephric glomerulus development"/>
    <property type="evidence" value="ECO:0007669"/>
    <property type="project" value="Ensembl"/>
</dbReference>
<dbReference type="GO" id="GO:0035502">
    <property type="term" value="P:metanephric part of ureteric bud development"/>
    <property type="evidence" value="ECO:0007669"/>
    <property type="project" value="Ensembl"/>
</dbReference>
<dbReference type="GO" id="GO:0072283">
    <property type="term" value="P:metanephric renal vesicle morphogenesis"/>
    <property type="evidence" value="ECO:0007669"/>
    <property type="project" value="Ensembl"/>
</dbReference>
<dbReference type="GO" id="GO:0072284">
    <property type="term" value="P:metanephric S-shaped body morphogenesis"/>
    <property type="evidence" value="ECO:0007669"/>
    <property type="project" value="Ensembl"/>
</dbReference>
<dbReference type="GO" id="GO:0008045">
    <property type="term" value="P:motor neuron axon guidance"/>
    <property type="evidence" value="ECO:0000250"/>
    <property type="project" value="UniProtKB"/>
</dbReference>
<dbReference type="GO" id="GO:0045892">
    <property type="term" value="P:negative regulation of DNA-templated transcription"/>
    <property type="evidence" value="ECO:0000250"/>
    <property type="project" value="UniProtKB"/>
</dbReference>
<dbReference type="GO" id="GO:0035849">
    <property type="term" value="P:nephric duct elongation"/>
    <property type="evidence" value="ECO:0007669"/>
    <property type="project" value="Ensembl"/>
</dbReference>
<dbReference type="GO" id="GO:0072178">
    <property type="term" value="P:nephric duct morphogenesis"/>
    <property type="evidence" value="ECO:0000250"/>
    <property type="project" value="UniProtKB"/>
</dbReference>
<dbReference type="GO" id="GO:0007399">
    <property type="term" value="P:nervous system development"/>
    <property type="evidence" value="ECO:0000304"/>
    <property type="project" value="ProtInc"/>
</dbReference>
<dbReference type="GO" id="GO:0030182">
    <property type="term" value="P:neuron differentiation"/>
    <property type="evidence" value="ECO:0000318"/>
    <property type="project" value="GO_Central"/>
</dbReference>
<dbReference type="GO" id="GO:0060066">
    <property type="term" value="P:oviduct development"/>
    <property type="evidence" value="ECO:0000250"/>
    <property type="project" value="UniProtKB"/>
</dbReference>
<dbReference type="GO" id="GO:0035846">
    <property type="term" value="P:oviduct epithelium development"/>
    <property type="evidence" value="ECO:0000250"/>
    <property type="project" value="UniProtKB"/>
</dbReference>
<dbReference type="GO" id="GO:0061205">
    <property type="term" value="P:paramesonephric duct development"/>
    <property type="evidence" value="ECO:0000250"/>
    <property type="project" value="UniProtKB"/>
</dbReference>
<dbReference type="GO" id="GO:0007389">
    <property type="term" value="P:pattern specification process"/>
    <property type="evidence" value="ECO:0000250"/>
    <property type="project" value="UniProtKB"/>
</dbReference>
<dbReference type="GO" id="GO:2000744">
    <property type="term" value="P:positive regulation of anterior head development"/>
    <property type="evidence" value="ECO:0000250"/>
    <property type="project" value="UniProtKB"/>
</dbReference>
<dbReference type="GO" id="GO:0090190">
    <property type="term" value="P:positive regulation of branching involved in ureteric bud morphogenesis"/>
    <property type="evidence" value="ECO:0000250"/>
    <property type="project" value="UniProtKB"/>
</dbReference>
<dbReference type="GO" id="GO:0045893">
    <property type="term" value="P:positive regulation of DNA-templated transcription"/>
    <property type="evidence" value="ECO:0000250"/>
    <property type="project" value="UniProtKB"/>
</dbReference>
<dbReference type="GO" id="GO:0040019">
    <property type="term" value="P:positive regulation of embryonic development"/>
    <property type="evidence" value="ECO:0000250"/>
    <property type="project" value="UniProtKB"/>
</dbReference>
<dbReference type="GO" id="GO:2000543">
    <property type="term" value="P:positive regulation of gastrulation"/>
    <property type="evidence" value="ECO:0000250"/>
    <property type="project" value="UniProtKB"/>
</dbReference>
<dbReference type="GO" id="GO:2000768">
    <property type="term" value="P:positive regulation of nephron tubule epithelial cell differentiation"/>
    <property type="evidence" value="ECO:0000250"/>
    <property type="project" value="UniProtKB"/>
</dbReference>
<dbReference type="GO" id="GO:0009791">
    <property type="term" value="P:post-embryonic development"/>
    <property type="evidence" value="ECO:0000250"/>
    <property type="project" value="UniProtKB"/>
</dbReference>
<dbReference type="GO" id="GO:0090009">
    <property type="term" value="P:primitive streak formation"/>
    <property type="evidence" value="ECO:0000250"/>
    <property type="project" value="UniProtKB"/>
</dbReference>
<dbReference type="GO" id="GO:0048793">
    <property type="term" value="P:pronephros development"/>
    <property type="evidence" value="ECO:0007669"/>
    <property type="project" value="Ensembl"/>
</dbReference>
<dbReference type="GO" id="GO:0010468">
    <property type="term" value="P:regulation of gene expression"/>
    <property type="evidence" value="ECO:0000250"/>
    <property type="project" value="UniProtKB"/>
</dbReference>
<dbReference type="GO" id="GO:0006357">
    <property type="term" value="P:regulation of transcription by RNA polymerase II"/>
    <property type="evidence" value="ECO:0000318"/>
    <property type="project" value="GO_Central"/>
</dbReference>
<dbReference type="GO" id="GO:0072077">
    <property type="term" value="P:renal vesicle morphogenesis"/>
    <property type="evidence" value="ECO:0000250"/>
    <property type="project" value="UniProtKB"/>
</dbReference>
<dbReference type="GO" id="GO:0010842">
    <property type="term" value="P:retina layer formation"/>
    <property type="evidence" value="ECO:0000250"/>
    <property type="project" value="UniProtKB"/>
</dbReference>
<dbReference type="GO" id="GO:0072050">
    <property type="term" value="P:S-shaped body morphogenesis"/>
    <property type="evidence" value="ECO:0000250"/>
    <property type="project" value="UniProtKB"/>
</dbReference>
<dbReference type="GO" id="GO:0032525">
    <property type="term" value="P:somite rostral/caudal axis specification"/>
    <property type="evidence" value="ECO:0007669"/>
    <property type="project" value="Ensembl"/>
</dbReference>
<dbReference type="GO" id="GO:0021527">
    <property type="term" value="P:spinal cord association neuron differentiation"/>
    <property type="evidence" value="ECO:0000250"/>
    <property type="project" value="UniProtKB"/>
</dbReference>
<dbReference type="GO" id="GO:0021537">
    <property type="term" value="P:telencephalon development"/>
    <property type="evidence" value="ECO:0007669"/>
    <property type="project" value="Ensembl"/>
</dbReference>
<dbReference type="GO" id="GO:0006366">
    <property type="term" value="P:transcription by RNA polymerase II"/>
    <property type="evidence" value="ECO:0000250"/>
    <property type="project" value="UniProtKB"/>
</dbReference>
<dbReference type="GO" id="GO:0072197">
    <property type="term" value="P:ureter morphogenesis"/>
    <property type="evidence" value="ECO:0007669"/>
    <property type="project" value="Ensembl"/>
</dbReference>
<dbReference type="GO" id="GO:0001657">
    <property type="term" value="P:ureteric bud development"/>
    <property type="evidence" value="ECO:0000250"/>
    <property type="project" value="UniProtKB"/>
</dbReference>
<dbReference type="GO" id="GO:0001655">
    <property type="term" value="P:urogenital system development"/>
    <property type="evidence" value="ECO:0000250"/>
    <property type="project" value="UniProtKB"/>
</dbReference>
<dbReference type="GO" id="GO:0035847">
    <property type="term" value="P:uterine epithelium development"/>
    <property type="evidence" value="ECO:0000250"/>
    <property type="project" value="UniProtKB"/>
</dbReference>
<dbReference type="GO" id="GO:0060065">
    <property type="term" value="P:uterus development"/>
    <property type="evidence" value="ECO:0000250"/>
    <property type="project" value="UniProtKB"/>
</dbReference>
<dbReference type="GO" id="GO:0060068">
    <property type="term" value="P:vagina development"/>
    <property type="evidence" value="ECO:0000250"/>
    <property type="project" value="UniProtKB"/>
</dbReference>
<dbReference type="GO" id="GO:0021517">
    <property type="term" value="P:ventral spinal cord development"/>
    <property type="evidence" value="ECO:0007669"/>
    <property type="project" value="Ensembl"/>
</dbReference>
<dbReference type="CDD" id="cd00086">
    <property type="entry name" value="homeodomain"/>
    <property type="match status" value="1"/>
</dbReference>
<dbReference type="CDD" id="cd09367">
    <property type="entry name" value="LIM1_Lhx1_Lhx5"/>
    <property type="match status" value="1"/>
</dbReference>
<dbReference type="CDD" id="cd09375">
    <property type="entry name" value="LIM2_Lhx1_Lhx5"/>
    <property type="match status" value="1"/>
</dbReference>
<dbReference type="FunFam" id="2.10.110.10:FF:000120">
    <property type="entry name" value="Insulin gene enhancer protein ISL-2"/>
    <property type="match status" value="1"/>
</dbReference>
<dbReference type="FunFam" id="1.10.10.60:FF:000075">
    <property type="entry name" value="LIM/homeobox protein Lhx1"/>
    <property type="match status" value="1"/>
</dbReference>
<dbReference type="FunFam" id="2.10.110.10:FF:000046">
    <property type="entry name" value="LIM/homeobox protein Lhx1"/>
    <property type="match status" value="1"/>
</dbReference>
<dbReference type="Gene3D" id="2.10.110.10">
    <property type="entry name" value="Cysteine Rich Protein"/>
    <property type="match status" value="2"/>
</dbReference>
<dbReference type="Gene3D" id="1.10.10.60">
    <property type="entry name" value="Homeodomain-like"/>
    <property type="match status" value="1"/>
</dbReference>
<dbReference type="InterPro" id="IPR001356">
    <property type="entry name" value="HD"/>
</dbReference>
<dbReference type="InterPro" id="IPR017970">
    <property type="entry name" value="Homeobox_CS"/>
</dbReference>
<dbReference type="InterPro" id="IPR009057">
    <property type="entry name" value="Homeodomain-like_sf"/>
</dbReference>
<dbReference type="InterPro" id="IPR049618">
    <property type="entry name" value="Lhx1/5_LIM1"/>
</dbReference>
<dbReference type="InterPro" id="IPR049619">
    <property type="entry name" value="Lhx1/5_LIM2"/>
</dbReference>
<dbReference type="InterPro" id="IPR050453">
    <property type="entry name" value="LIM_Homeobox_TF"/>
</dbReference>
<dbReference type="InterPro" id="IPR001781">
    <property type="entry name" value="Znf_LIM"/>
</dbReference>
<dbReference type="PANTHER" id="PTHR24208">
    <property type="entry name" value="LIM/HOMEOBOX PROTEIN LHX"/>
    <property type="match status" value="1"/>
</dbReference>
<dbReference type="PANTHER" id="PTHR24208:SF106">
    <property type="entry name" value="LIM_HOMEOBOX PROTEIN LHX1"/>
    <property type="match status" value="1"/>
</dbReference>
<dbReference type="Pfam" id="PF00046">
    <property type="entry name" value="Homeodomain"/>
    <property type="match status" value="1"/>
</dbReference>
<dbReference type="Pfam" id="PF00412">
    <property type="entry name" value="LIM"/>
    <property type="match status" value="2"/>
</dbReference>
<dbReference type="SMART" id="SM00389">
    <property type="entry name" value="HOX"/>
    <property type="match status" value="1"/>
</dbReference>
<dbReference type="SMART" id="SM00132">
    <property type="entry name" value="LIM"/>
    <property type="match status" value="2"/>
</dbReference>
<dbReference type="SUPFAM" id="SSF57716">
    <property type="entry name" value="Glucocorticoid receptor-like (DNA-binding domain)"/>
    <property type="match status" value="2"/>
</dbReference>
<dbReference type="SUPFAM" id="SSF46689">
    <property type="entry name" value="Homeodomain-like"/>
    <property type="match status" value="1"/>
</dbReference>
<dbReference type="PROSITE" id="PS00027">
    <property type="entry name" value="HOMEOBOX_1"/>
    <property type="match status" value="1"/>
</dbReference>
<dbReference type="PROSITE" id="PS50071">
    <property type="entry name" value="HOMEOBOX_2"/>
    <property type="match status" value="1"/>
</dbReference>
<dbReference type="PROSITE" id="PS00478">
    <property type="entry name" value="LIM_DOMAIN_1"/>
    <property type="match status" value="2"/>
</dbReference>
<dbReference type="PROSITE" id="PS50023">
    <property type="entry name" value="LIM_DOMAIN_2"/>
    <property type="match status" value="2"/>
</dbReference>